<accession>C5FJE3</accession>
<protein>
    <recommendedName>
        <fullName>Dipeptidyl peptidase 4</fullName>
        <ecNumber>3.4.14.5</ecNumber>
    </recommendedName>
    <alternativeName>
        <fullName>Dipeptidyl peptidase IV</fullName>
        <shortName>DPP IV</shortName>
        <shortName>DppIV</shortName>
    </alternativeName>
</protein>
<feature type="signal peptide" evidence="2">
    <location>
        <begin position="1"/>
        <end position="15"/>
    </location>
</feature>
<feature type="chain" id="PRO_0000384087" description="Dipeptidyl peptidase 4">
    <location>
        <begin position="16"/>
        <end position="775"/>
    </location>
</feature>
<feature type="active site" description="Charge relay system" evidence="3">
    <location>
        <position position="613"/>
    </location>
</feature>
<feature type="active site" description="Charge relay system" evidence="3">
    <location>
        <position position="690"/>
    </location>
</feature>
<feature type="active site" description="Charge relay system" evidence="3">
    <location>
        <position position="725"/>
    </location>
</feature>
<feature type="glycosylation site" description="N-linked (GlcNAc...) asparagine" evidence="2">
    <location>
        <position position="81"/>
    </location>
</feature>
<feature type="glycosylation site" description="N-linked (GlcNAc...) asparagine" evidence="2">
    <location>
        <position position="111"/>
    </location>
</feature>
<feature type="glycosylation site" description="N-linked (GlcNAc...) asparagine" evidence="2">
    <location>
        <position position="219"/>
    </location>
</feature>
<feature type="glycosylation site" description="N-linked (GlcNAc...) asparagine" evidence="2">
    <location>
        <position position="731"/>
    </location>
</feature>
<proteinExistence type="inferred from homology"/>
<organism>
    <name type="scientific">Arthroderma otae (strain ATCC MYA-4605 / CBS 113480)</name>
    <name type="common">Microsporum canis</name>
    <dbReference type="NCBI Taxonomy" id="554155"/>
    <lineage>
        <taxon>Eukaryota</taxon>
        <taxon>Fungi</taxon>
        <taxon>Dikarya</taxon>
        <taxon>Ascomycota</taxon>
        <taxon>Pezizomycotina</taxon>
        <taxon>Eurotiomycetes</taxon>
        <taxon>Eurotiomycetidae</taxon>
        <taxon>Onygenales</taxon>
        <taxon>Arthrodermataceae</taxon>
        <taxon>Microsporum</taxon>
    </lineage>
</organism>
<sequence>MKFLSLLLLVGVAQAIVPPREPRPPTGGGKKLLTYKECVPRATLAPRSTSLAWINSDEDGQYISQSDDGALILQNIVTNTNKTLVAADKVPKGFYDYWIKPDLTAVLWATNYTKQYRHSYFANYFILDIEKGSLTPLAEDQSGDIQYAQWNPVDNSIAYVRGNDLYVWNSGKTKRITENGGPDTFNGVPDWVYEEEIFGDRFALWFSPDGEYLAYLRFNETGVPTYTVPYYKNKQKIAPAYPRELEIRYPKVSAKNPTVQFHLLNLASSEETSIPVTAFPEDDLIIGEVAWLSSGHDSVAFRAFNRVQDTEKIVNVKVGSKESKVIRERDGTDGWIDNLLSMSYIGKVNGKEYYVDISDASGWAHLYLYPVDGGKEIALTKGEWEVTAILKVDTKSKLIYFTSTKFHSTTRHVYSVSYDTKVMTPLVNDREAAYYSASFSAKGGYYILSYQGPNVPYQELYSVKDKKKPIKTITSNDALIEKLKDYKLPKITFFEIKLPSGESLNVMQRLPPNFNPFKKYPVLFTPYGGPGAQEVSQAWKALDFKAYITSDPELEYVTWTVDNRGTGFKGRKFRSTVTKRLGFLEPQDQVFAAKEILKNRWADKDHVGMWGWSYGGFLTAKTMETDSGVFTFGMSTAPVSDFRLYDSMYTERYMKTVELNADGYSETAVHKTDGFKNLKGHYLIQHGTGDDNVHFQNSAVLSNTLMNGGVTPDRLTTQWFTDSDHGVRYDNDSTFQYKQLTKMVYDQKQPRPQTTPLHQWSKRVLAALFGEEAEE</sequence>
<reference key="1">
    <citation type="journal article" date="2012" name="MBio">
        <title>Comparative genome analysis of Trichophyton rubrum and related dermatophytes reveals candidate genes involved in infection.</title>
        <authorList>
            <person name="Martinez D.A."/>
            <person name="Oliver B.G."/>
            <person name="Graeser Y."/>
            <person name="Goldberg J.M."/>
            <person name="Li W."/>
            <person name="Martinez-Rossi N.M."/>
            <person name="Monod M."/>
            <person name="Shelest E."/>
            <person name="Barton R.C."/>
            <person name="Birch E."/>
            <person name="Brakhage A.A."/>
            <person name="Chen Z."/>
            <person name="Gurr S.J."/>
            <person name="Heiman D."/>
            <person name="Heitman J."/>
            <person name="Kosti I."/>
            <person name="Rossi A."/>
            <person name="Saif S."/>
            <person name="Samalova M."/>
            <person name="Saunders C.W."/>
            <person name="Shea T."/>
            <person name="Summerbell R.C."/>
            <person name="Xu J."/>
            <person name="Young S."/>
            <person name="Zeng Q."/>
            <person name="Birren B.W."/>
            <person name="Cuomo C.A."/>
            <person name="White T.C."/>
        </authorList>
    </citation>
    <scope>NUCLEOTIDE SEQUENCE [LARGE SCALE GENOMIC DNA]</scope>
    <source>
        <strain>ATCC MYA-4605 / CBS 113480</strain>
    </source>
</reference>
<dbReference type="EC" id="3.4.14.5"/>
<dbReference type="EMBL" id="DS995702">
    <property type="protein sequence ID" value="EEQ29564.1"/>
    <property type="status" value="ALT_INIT"/>
    <property type="molecule type" value="Genomic_DNA"/>
</dbReference>
<dbReference type="RefSeq" id="XP_002849449.1">
    <property type="nucleotide sequence ID" value="XM_002849403.1"/>
</dbReference>
<dbReference type="SMR" id="C5FJE3"/>
<dbReference type="STRING" id="554155.C5FJE3"/>
<dbReference type="ESTHER" id="nanot-dpp4">
    <property type="family name" value="DPP4N_Peptidase_S9"/>
</dbReference>
<dbReference type="MEROPS" id="S09.008"/>
<dbReference type="GlyCosmos" id="C5FJE3">
    <property type="glycosylation" value="4 sites, No reported glycans"/>
</dbReference>
<dbReference type="GeneID" id="9226525"/>
<dbReference type="eggNOG" id="KOG2100">
    <property type="taxonomic scope" value="Eukaryota"/>
</dbReference>
<dbReference type="HOGENOM" id="CLU_006105_0_2_1"/>
<dbReference type="OrthoDB" id="16520at2759"/>
<dbReference type="Proteomes" id="UP000002035">
    <property type="component" value="Unassembled WGS sequence"/>
</dbReference>
<dbReference type="GO" id="GO:0005576">
    <property type="term" value="C:extracellular region"/>
    <property type="evidence" value="ECO:0007669"/>
    <property type="project" value="UniProtKB-SubCell"/>
</dbReference>
<dbReference type="GO" id="GO:0005886">
    <property type="term" value="C:plasma membrane"/>
    <property type="evidence" value="ECO:0007669"/>
    <property type="project" value="TreeGrafter"/>
</dbReference>
<dbReference type="GO" id="GO:0004177">
    <property type="term" value="F:aminopeptidase activity"/>
    <property type="evidence" value="ECO:0007669"/>
    <property type="project" value="UniProtKB-KW"/>
</dbReference>
<dbReference type="GO" id="GO:0008239">
    <property type="term" value="F:dipeptidyl-peptidase activity"/>
    <property type="evidence" value="ECO:0007669"/>
    <property type="project" value="UniProtKB-EC"/>
</dbReference>
<dbReference type="GO" id="GO:0004252">
    <property type="term" value="F:serine-type endopeptidase activity"/>
    <property type="evidence" value="ECO:0007669"/>
    <property type="project" value="InterPro"/>
</dbReference>
<dbReference type="GO" id="GO:0006508">
    <property type="term" value="P:proteolysis"/>
    <property type="evidence" value="ECO:0007669"/>
    <property type="project" value="UniProtKB-KW"/>
</dbReference>
<dbReference type="FunFam" id="3.40.50.1820:FF:000003">
    <property type="entry name" value="Dipeptidyl peptidase 4"/>
    <property type="match status" value="1"/>
</dbReference>
<dbReference type="FunFam" id="2.140.10.30:FF:000003">
    <property type="entry name" value="Probable dipeptidyl peptidase 4"/>
    <property type="match status" value="1"/>
</dbReference>
<dbReference type="Gene3D" id="3.40.50.1820">
    <property type="entry name" value="alpha/beta hydrolase"/>
    <property type="match status" value="1"/>
</dbReference>
<dbReference type="Gene3D" id="2.140.10.30">
    <property type="entry name" value="Dipeptidylpeptidase IV, N-terminal domain"/>
    <property type="match status" value="1"/>
</dbReference>
<dbReference type="InterPro" id="IPR029058">
    <property type="entry name" value="AB_hydrolase_fold"/>
</dbReference>
<dbReference type="InterPro" id="IPR002471">
    <property type="entry name" value="Pept_S9_AS"/>
</dbReference>
<dbReference type="InterPro" id="IPR001375">
    <property type="entry name" value="Peptidase_S9_cat"/>
</dbReference>
<dbReference type="InterPro" id="IPR002469">
    <property type="entry name" value="Peptidase_S9B_N"/>
</dbReference>
<dbReference type="InterPro" id="IPR050278">
    <property type="entry name" value="Serine_Prot_S9B/DPPIV"/>
</dbReference>
<dbReference type="PANTHER" id="PTHR11731:SF162">
    <property type="entry name" value="DIPEPTIDYL PEPTIDASE 4-RELATED"/>
    <property type="match status" value="1"/>
</dbReference>
<dbReference type="PANTHER" id="PTHR11731">
    <property type="entry name" value="PROTEASE FAMILY S9B,C DIPEPTIDYL-PEPTIDASE IV-RELATED"/>
    <property type="match status" value="1"/>
</dbReference>
<dbReference type="Pfam" id="PF00930">
    <property type="entry name" value="DPPIV_N"/>
    <property type="match status" value="1"/>
</dbReference>
<dbReference type="Pfam" id="PF00326">
    <property type="entry name" value="Peptidase_S9"/>
    <property type="match status" value="1"/>
</dbReference>
<dbReference type="SUPFAM" id="SSF53474">
    <property type="entry name" value="alpha/beta-Hydrolases"/>
    <property type="match status" value="1"/>
</dbReference>
<dbReference type="SUPFAM" id="SSF82171">
    <property type="entry name" value="DPP6 N-terminal domain-like"/>
    <property type="match status" value="1"/>
</dbReference>
<dbReference type="PROSITE" id="PS00708">
    <property type="entry name" value="PRO_ENDOPEP_SER"/>
    <property type="match status" value="1"/>
</dbReference>
<gene>
    <name type="primary">DPP4</name>
    <name type="ORF">MCYG_02383</name>
</gene>
<name>DPP4_ARTOC</name>
<evidence type="ECO:0000250" key="1"/>
<evidence type="ECO:0000255" key="2"/>
<evidence type="ECO:0000255" key="3">
    <source>
        <dbReference type="PROSITE-ProRule" id="PRU10084"/>
    </source>
</evidence>
<evidence type="ECO:0000305" key="4"/>
<keyword id="KW-0031">Aminopeptidase</keyword>
<keyword id="KW-0325">Glycoprotein</keyword>
<keyword id="KW-0378">Hydrolase</keyword>
<keyword id="KW-0645">Protease</keyword>
<keyword id="KW-1185">Reference proteome</keyword>
<keyword id="KW-0964">Secreted</keyword>
<keyword id="KW-0720">Serine protease</keyword>
<keyword id="KW-0732">Signal</keyword>
<keyword id="KW-0843">Virulence</keyword>
<comment type="function">
    <text evidence="1">Extracellular dipeptidyl-peptidase which removes N-terminal dipeptides sequentially from polypeptides having unsubstituted N-termini provided that the penultimate residue is proline. Contributes to pathogenicity (By similarity).</text>
</comment>
<comment type="catalytic activity">
    <reaction evidence="3">
        <text>Release of an N-terminal dipeptide, Xaa-Yaa-|-Zaa-, from a polypeptide, preferentially when Yaa is Pro, provided Zaa is neither Pro nor hydroxyproline.</text>
        <dbReference type="EC" id="3.4.14.5"/>
    </reaction>
</comment>
<comment type="subcellular location">
    <subcellularLocation>
        <location evidence="1">Secreted</location>
    </subcellularLocation>
</comment>
<comment type="similarity">
    <text evidence="4">Belongs to the peptidase S9B family.</text>
</comment>
<comment type="sequence caution" evidence="4">
    <conflict type="erroneous initiation">
        <sequence resource="EMBL-CDS" id="EEQ29564"/>
    </conflict>
</comment>